<geneLocation type="mitochondrion"/>
<feature type="chain" id="PRO_0000275142" description="NADH-ubiquinone oxidoreductase chain 4L">
    <location>
        <begin position="1"/>
        <end position="98"/>
    </location>
</feature>
<feature type="transmembrane region" description="Helical" evidence="3">
    <location>
        <begin position="1"/>
        <end position="21"/>
    </location>
</feature>
<feature type="transmembrane region" description="Helical" evidence="3">
    <location>
        <begin position="29"/>
        <end position="49"/>
    </location>
</feature>
<feature type="transmembrane region" description="Helical" evidence="3">
    <location>
        <begin position="61"/>
        <end position="81"/>
    </location>
</feature>
<dbReference type="EC" id="7.1.1.2"/>
<dbReference type="EMBL" id="DQ312374">
    <property type="protein sequence ID" value="ABC47538.1"/>
    <property type="molecule type" value="Genomic_DNA"/>
</dbReference>
<dbReference type="EMBL" id="DQ312373">
    <property type="protein sequence ID" value="ABC47535.1"/>
    <property type="molecule type" value="Genomic_DNA"/>
</dbReference>
<dbReference type="SMR" id="Q1HV23"/>
<dbReference type="GO" id="GO:0005743">
    <property type="term" value="C:mitochondrial inner membrane"/>
    <property type="evidence" value="ECO:0000250"/>
    <property type="project" value="UniProtKB"/>
</dbReference>
<dbReference type="GO" id="GO:0045271">
    <property type="term" value="C:respiratory chain complex I"/>
    <property type="evidence" value="ECO:0000250"/>
    <property type="project" value="UniProtKB"/>
</dbReference>
<dbReference type="GO" id="GO:0008137">
    <property type="term" value="F:NADH dehydrogenase (ubiquinone) activity"/>
    <property type="evidence" value="ECO:0000250"/>
    <property type="project" value="UniProtKB"/>
</dbReference>
<dbReference type="GO" id="GO:0042773">
    <property type="term" value="P:ATP synthesis coupled electron transport"/>
    <property type="evidence" value="ECO:0007669"/>
    <property type="project" value="InterPro"/>
</dbReference>
<dbReference type="FunFam" id="1.10.287.3510:FF:000002">
    <property type="entry name" value="NADH-ubiquinone oxidoreductase chain 4L"/>
    <property type="match status" value="1"/>
</dbReference>
<dbReference type="Gene3D" id="1.10.287.3510">
    <property type="match status" value="1"/>
</dbReference>
<dbReference type="InterPro" id="IPR001133">
    <property type="entry name" value="NADH_UbQ_OxRdtase_chain4L/K"/>
</dbReference>
<dbReference type="InterPro" id="IPR039428">
    <property type="entry name" value="NUOK/Mnh_C1-like"/>
</dbReference>
<dbReference type="PANTHER" id="PTHR11434:SF0">
    <property type="entry name" value="NADH-UBIQUINONE OXIDOREDUCTASE CHAIN 4L"/>
    <property type="match status" value="1"/>
</dbReference>
<dbReference type="PANTHER" id="PTHR11434">
    <property type="entry name" value="NADH-UBIQUINONE OXIDOREDUCTASE SUBUNIT ND4L"/>
    <property type="match status" value="1"/>
</dbReference>
<dbReference type="Pfam" id="PF00420">
    <property type="entry name" value="Oxidored_q2"/>
    <property type="match status" value="1"/>
</dbReference>
<accession>Q1HV23</accession>
<organism>
    <name type="scientific">Vampyressa brocki</name>
    <name type="common">Brock's yellow-eared bat</name>
    <dbReference type="NCBI Taxonomy" id="196701"/>
    <lineage>
        <taxon>Eukaryota</taxon>
        <taxon>Metazoa</taxon>
        <taxon>Chordata</taxon>
        <taxon>Craniata</taxon>
        <taxon>Vertebrata</taxon>
        <taxon>Euteleostomi</taxon>
        <taxon>Mammalia</taxon>
        <taxon>Eutheria</taxon>
        <taxon>Laurasiatheria</taxon>
        <taxon>Chiroptera</taxon>
        <taxon>Yangochiroptera</taxon>
        <taxon>Phyllostomidae</taxon>
        <taxon>Stenodermatinae</taxon>
        <taxon>Vampyressa</taxon>
    </lineage>
</organism>
<reference key="1">
    <citation type="journal article" date="2006" name="Mol. Phylogenet. Evol.">
        <title>Molecular systematics of Vampyressine bats (Phyllostomidae: Stenodermatinae) with comparison of direct and indirect surveys of mitochondrial DNA variation.</title>
        <authorList>
            <person name="Hoofer S.R."/>
            <person name="Baker R.J."/>
        </authorList>
    </citation>
    <scope>NUCLEOTIDE SEQUENCE [GENOMIC DNA]</scope>
</reference>
<keyword id="KW-0249">Electron transport</keyword>
<keyword id="KW-0472">Membrane</keyword>
<keyword id="KW-0496">Mitochondrion</keyword>
<keyword id="KW-0999">Mitochondrion inner membrane</keyword>
<keyword id="KW-0520">NAD</keyword>
<keyword id="KW-0679">Respiratory chain</keyword>
<keyword id="KW-1278">Translocase</keyword>
<keyword id="KW-0812">Transmembrane</keyword>
<keyword id="KW-1133">Transmembrane helix</keyword>
<keyword id="KW-0813">Transport</keyword>
<keyword id="KW-0830">Ubiquinone</keyword>
<comment type="function">
    <text evidence="1">Core subunit of the mitochondrial membrane respiratory chain NADH dehydrogenase (Complex I) which catalyzes electron transfer from NADH through the respiratory chain, using ubiquinone as an electron acceptor. Part of the enzyme membrane arm which is embedded in the lipid bilayer and involved in proton translocation.</text>
</comment>
<comment type="catalytic activity">
    <reaction evidence="1">
        <text>a ubiquinone + NADH + 5 H(+)(in) = a ubiquinol + NAD(+) + 4 H(+)(out)</text>
        <dbReference type="Rhea" id="RHEA:29091"/>
        <dbReference type="Rhea" id="RHEA-COMP:9565"/>
        <dbReference type="Rhea" id="RHEA-COMP:9566"/>
        <dbReference type="ChEBI" id="CHEBI:15378"/>
        <dbReference type="ChEBI" id="CHEBI:16389"/>
        <dbReference type="ChEBI" id="CHEBI:17976"/>
        <dbReference type="ChEBI" id="CHEBI:57540"/>
        <dbReference type="ChEBI" id="CHEBI:57945"/>
        <dbReference type="EC" id="7.1.1.2"/>
    </reaction>
    <physiologicalReaction direction="left-to-right" evidence="1">
        <dbReference type="Rhea" id="RHEA:29092"/>
    </physiologicalReaction>
</comment>
<comment type="subunit">
    <text evidence="2">Core subunit of respiratory chain NADH dehydrogenase (Complex I) which is composed of 45 different subunits.</text>
</comment>
<comment type="subcellular location">
    <subcellularLocation>
        <location evidence="2">Mitochondrion inner membrane</location>
        <topology evidence="3">Multi-pass membrane protein</topology>
    </subcellularLocation>
</comment>
<comment type="similarity">
    <text evidence="4">Belongs to the complex I subunit 4L family.</text>
</comment>
<sequence>MSLTYMNMFMAFTISLLGLLMYRAHMMSSLLCLEGMMLSLFVMMTMTILNTHLTLASMIPIILLVFAACEAALGLSLLVMVSTTYGMDYVQNLNLLQC</sequence>
<proteinExistence type="inferred from homology"/>
<gene>
    <name type="primary">MT-ND4L</name>
    <name type="synonym">MTND4L</name>
    <name type="synonym">NADH4L</name>
    <name type="synonym">ND4L</name>
</gene>
<protein>
    <recommendedName>
        <fullName>NADH-ubiquinone oxidoreductase chain 4L</fullName>
        <ecNumber>7.1.1.2</ecNumber>
    </recommendedName>
    <alternativeName>
        <fullName>NADH dehydrogenase subunit 4L</fullName>
    </alternativeName>
</protein>
<evidence type="ECO:0000250" key="1">
    <source>
        <dbReference type="UniProtKB" id="P03901"/>
    </source>
</evidence>
<evidence type="ECO:0000250" key="2">
    <source>
        <dbReference type="UniProtKB" id="P03902"/>
    </source>
</evidence>
<evidence type="ECO:0000255" key="3"/>
<evidence type="ECO:0000305" key="4"/>
<name>NU4LM_VAMBR</name>